<protein>
    <recommendedName>
        <fullName evidence="1">Putative pre-16S rRNA nuclease</fullName>
        <ecNumber evidence="1">3.1.-.-</ecNumber>
    </recommendedName>
</protein>
<sequence>MPRGVYLGFDFGYKRIGVAVGQRLTCSASPLSTIEAKAGIPDWNTIQKVITQWNPQALIVGLPTCIDDRELYTTSAARRFAKQLHKQFSLPVHLVDERLSTVEARGYLFEQGGYRQIKKAEVDSIAACVILEQWLQQSE</sequence>
<comment type="function">
    <text evidence="1">Could be a nuclease involved in processing of the 5'-end of pre-16S rRNA.</text>
</comment>
<comment type="subcellular location">
    <subcellularLocation>
        <location evidence="1">Cytoplasm</location>
    </subcellularLocation>
</comment>
<comment type="similarity">
    <text evidence="1">Belongs to the YqgF nuclease family.</text>
</comment>
<organism>
    <name type="scientific">Legionella pneumophila (strain Lens)</name>
    <dbReference type="NCBI Taxonomy" id="297245"/>
    <lineage>
        <taxon>Bacteria</taxon>
        <taxon>Pseudomonadati</taxon>
        <taxon>Pseudomonadota</taxon>
        <taxon>Gammaproteobacteria</taxon>
        <taxon>Legionellales</taxon>
        <taxon>Legionellaceae</taxon>
        <taxon>Legionella</taxon>
    </lineage>
</organism>
<keyword id="KW-0963">Cytoplasm</keyword>
<keyword id="KW-0378">Hydrolase</keyword>
<keyword id="KW-0540">Nuclease</keyword>
<keyword id="KW-0690">Ribosome biogenesis</keyword>
<evidence type="ECO:0000255" key="1">
    <source>
        <dbReference type="HAMAP-Rule" id="MF_00651"/>
    </source>
</evidence>
<accession>Q5WYW4</accession>
<proteinExistence type="inferred from homology"/>
<feature type="chain" id="PRO_0000172082" description="Putative pre-16S rRNA nuclease">
    <location>
        <begin position="1"/>
        <end position="139"/>
    </location>
</feature>
<reference key="1">
    <citation type="journal article" date="2004" name="Nat. Genet.">
        <title>Evidence in the Legionella pneumophila genome for exploitation of host cell functions and high genome plasticity.</title>
        <authorList>
            <person name="Cazalet C."/>
            <person name="Rusniok C."/>
            <person name="Brueggemann H."/>
            <person name="Zidane N."/>
            <person name="Magnier A."/>
            <person name="Ma L."/>
            <person name="Tichit M."/>
            <person name="Jarraud S."/>
            <person name="Bouchier C."/>
            <person name="Vandenesch F."/>
            <person name="Kunst F."/>
            <person name="Etienne J."/>
            <person name="Glaser P."/>
            <person name="Buchrieser C."/>
        </authorList>
    </citation>
    <scope>NUCLEOTIDE SEQUENCE [LARGE SCALE GENOMIC DNA]</scope>
    <source>
        <strain>Lens</strain>
    </source>
</reference>
<name>YQGF_LEGPL</name>
<dbReference type="EC" id="3.1.-.-" evidence="1"/>
<dbReference type="EMBL" id="CR628337">
    <property type="protein sequence ID" value="CAH14854.1"/>
    <property type="molecule type" value="Genomic_DNA"/>
</dbReference>
<dbReference type="RefSeq" id="WP_011214808.1">
    <property type="nucleotide sequence ID" value="NC_006369.1"/>
</dbReference>
<dbReference type="SMR" id="Q5WYW4"/>
<dbReference type="KEGG" id="lpf:lpl0621"/>
<dbReference type="LegioList" id="lpl0621"/>
<dbReference type="HOGENOM" id="CLU_098240_3_0_6"/>
<dbReference type="Proteomes" id="UP000002517">
    <property type="component" value="Chromosome"/>
</dbReference>
<dbReference type="GO" id="GO:0005829">
    <property type="term" value="C:cytosol"/>
    <property type="evidence" value="ECO:0007669"/>
    <property type="project" value="TreeGrafter"/>
</dbReference>
<dbReference type="GO" id="GO:0004518">
    <property type="term" value="F:nuclease activity"/>
    <property type="evidence" value="ECO:0007669"/>
    <property type="project" value="UniProtKB-KW"/>
</dbReference>
<dbReference type="GO" id="GO:0000967">
    <property type="term" value="P:rRNA 5'-end processing"/>
    <property type="evidence" value="ECO:0007669"/>
    <property type="project" value="UniProtKB-UniRule"/>
</dbReference>
<dbReference type="CDD" id="cd16964">
    <property type="entry name" value="YqgF"/>
    <property type="match status" value="1"/>
</dbReference>
<dbReference type="Gene3D" id="3.30.420.140">
    <property type="entry name" value="YqgF/RNase H-like domain"/>
    <property type="match status" value="1"/>
</dbReference>
<dbReference type="HAMAP" id="MF_00651">
    <property type="entry name" value="Nuclease_YqgF"/>
    <property type="match status" value="1"/>
</dbReference>
<dbReference type="InterPro" id="IPR012337">
    <property type="entry name" value="RNaseH-like_sf"/>
</dbReference>
<dbReference type="InterPro" id="IPR005227">
    <property type="entry name" value="YqgF"/>
</dbReference>
<dbReference type="InterPro" id="IPR006641">
    <property type="entry name" value="YqgF/RNaseH-like_dom"/>
</dbReference>
<dbReference type="InterPro" id="IPR037027">
    <property type="entry name" value="YqgF/RNaseH-like_dom_sf"/>
</dbReference>
<dbReference type="NCBIfam" id="TIGR00250">
    <property type="entry name" value="RNAse_H_YqgF"/>
    <property type="match status" value="1"/>
</dbReference>
<dbReference type="PANTHER" id="PTHR33317">
    <property type="entry name" value="POLYNUCLEOTIDYL TRANSFERASE, RIBONUCLEASE H-LIKE SUPERFAMILY PROTEIN"/>
    <property type="match status" value="1"/>
</dbReference>
<dbReference type="PANTHER" id="PTHR33317:SF4">
    <property type="entry name" value="POLYNUCLEOTIDYL TRANSFERASE, RIBONUCLEASE H-LIKE SUPERFAMILY PROTEIN"/>
    <property type="match status" value="1"/>
</dbReference>
<dbReference type="Pfam" id="PF03652">
    <property type="entry name" value="RuvX"/>
    <property type="match status" value="1"/>
</dbReference>
<dbReference type="SMART" id="SM00732">
    <property type="entry name" value="YqgFc"/>
    <property type="match status" value="1"/>
</dbReference>
<dbReference type="SUPFAM" id="SSF53098">
    <property type="entry name" value="Ribonuclease H-like"/>
    <property type="match status" value="1"/>
</dbReference>
<gene>
    <name type="ordered locus">lpl0621</name>
</gene>